<sequence>MSTKTVPEPEPHVLAVDDSIVDRTVISRLLRSSKYRVTTVDSGKRALEVLSLDRNVHMIITDYCMPEMTGFDLLKRVKESAELKEIPVVLMSSENSPTRIRRCLEEGAEDFLIKPVRPSDVSRLCNRVIMK</sequence>
<keyword id="KW-0932">Cytokinin signaling pathway</keyword>
<keyword id="KW-0963">Cytoplasm</keyword>
<keyword id="KW-0539">Nucleus</keyword>
<keyword id="KW-0597">Phosphoprotein</keyword>
<keyword id="KW-1185">Reference proteome</keyword>
<keyword id="KW-0804">Transcription</keyword>
<keyword id="KW-0805">Transcription regulation</keyword>
<keyword id="KW-0902">Two-component regulatory system</keyword>
<organism>
    <name type="scientific">Oryza sativa subsp. japonica</name>
    <name type="common">Rice</name>
    <dbReference type="NCBI Taxonomy" id="39947"/>
    <lineage>
        <taxon>Eukaryota</taxon>
        <taxon>Viridiplantae</taxon>
        <taxon>Streptophyta</taxon>
        <taxon>Embryophyta</taxon>
        <taxon>Tracheophyta</taxon>
        <taxon>Spermatophyta</taxon>
        <taxon>Magnoliopsida</taxon>
        <taxon>Liliopsida</taxon>
        <taxon>Poales</taxon>
        <taxon>Poaceae</taxon>
        <taxon>BOP clade</taxon>
        <taxon>Oryzoideae</taxon>
        <taxon>Oryzeae</taxon>
        <taxon>Oryzinae</taxon>
        <taxon>Oryza</taxon>
        <taxon>Oryza sativa</taxon>
    </lineage>
</organism>
<comment type="function">
    <text evidence="1">Functions as a response regulator involved in His-to-Asp phosphorelay signal transduction system. Phosphorylation of the Asp residue in the receiver domain activates the ability of the protein to promote the transcription of target genes. Type-A response regulators seem to act as negative regulators of the cytokinin signaling.</text>
</comment>
<comment type="subcellular location">
    <subcellularLocation>
        <location evidence="6">Cytoplasm</location>
        <location evidence="6">Cytosol</location>
    </subcellularLocation>
    <subcellularLocation>
        <location evidence="6">Nucleus</location>
    </subcellularLocation>
</comment>
<comment type="tissue specificity">
    <text evidence="4">Expressed in roots, leaf blades, leaf sheaths, shoot apex, flowers and panicles.</text>
</comment>
<comment type="induction">
    <text evidence="5">By cytokinin in roots and leaves.</text>
</comment>
<comment type="PTM">
    <text evidence="10">Two-component system major event consists of a His-to-Asp phosphorelay between a sensor histidine kinase (HK) and a response regulator (RR). In plants, the His-to-Asp phosphorelay involves an additional intermediate named Histidine-containing phosphotransfer protein (HPt). This multistep phosphorelay consists of a His-Asp-His-Asp sequential transfer of a phosphate group between first a His and an Asp of the HK protein, followed by the transfer to a conserved His of the HPt protein and finally the transfer to an Asp in the receiver domain of the RR protein.</text>
</comment>
<comment type="disruption phenotype">
    <text evidence="3">Dwarf, narrow leaf, low tillering, abnormal hull, viviparous and low fertility phenotype.</text>
</comment>
<comment type="similarity">
    <text evidence="10">Belongs to the ARR family. Type-A subfamily.</text>
</comment>
<name>ORR3_ORYSJ</name>
<feature type="chain" id="PRO_0000433820" description="Two-component response regulator ORR3">
    <location>
        <begin position="1"/>
        <end position="131"/>
    </location>
</feature>
<feature type="domain" description="Response regulatory" evidence="2">
    <location>
        <begin position="12"/>
        <end position="129"/>
    </location>
</feature>
<feature type="modified residue" description="4-aspartylphosphate" evidence="2">
    <location>
        <position position="62"/>
    </location>
</feature>
<proteinExistence type="evidence at transcript level"/>
<gene>
    <name evidence="9" type="primary">RR3</name>
    <name evidence="12" type="ordered locus">Os02g0830200</name>
    <name evidence="10" type="ordered locus">LOC_Os02g58350</name>
    <name evidence="11" type="ORF">OJ1124_D06.19</name>
    <name evidence="13" type="ORF">OsJ_08987</name>
</gene>
<protein>
    <recommendedName>
        <fullName evidence="10">Two-component response regulator ORR3</fullName>
    </recommendedName>
    <alternativeName>
        <fullName evidence="8">OsRR3</fullName>
    </alternativeName>
    <alternativeName>
        <fullName evidence="7">OsRRA7</fullName>
    </alternativeName>
</protein>
<accession>Q6K9T0</accession>
<accession>A0A0P0VRN9</accession>
<dbReference type="EMBL" id="BR000313">
    <property type="protein sequence ID" value="FAA00265.1"/>
    <property type="molecule type" value="Genomic_DNA"/>
</dbReference>
<dbReference type="EMBL" id="AB249655">
    <property type="protein sequence ID" value="BAE79349.1"/>
    <property type="molecule type" value="mRNA"/>
</dbReference>
<dbReference type="EMBL" id="AP004043">
    <property type="protein sequence ID" value="BAD22948.1"/>
    <property type="molecule type" value="Genomic_DNA"/>
</dbReference>
<dbReference type="EMBL" id="AP008208">
    <property type="protein sequence ID" value="BAF10527.1"/>
    <property type="molecule type" value="Genomic_DNA"/>
</dbReference>
<dbReference type="EMBL" id="AP014958">
    <property type="protein sequence ID" value="BAS81741.1"/>
    <property type="molecule type" value="Genomic_DNA"/>
</dbReference>
<dbReference type="EMBL" id="CM000139">
    <property type="protein sequence ID" value="EAZ25187.1"/>
    <property type="molecule type" value="Genomic_DNA"/>
</dbReference>
<dbReference type="RefSeq" id="XP_015625250.1">
    <property type="nucleotide sequence ID" value="XM_015769764.1"/>
</dbReference>
<dbReference type="RefSeq" id="XP_015625251.1">
    <property type="nucleotide sequence ID" value="XM_015769765.1"/>
</dbReference>
<dbReference type="RefSeq" id="XP_015625253.1">
    <property type="nucleotide sequence ID" value="XM_015769767.1"/>
</dbReference>
<dbReference type="SMR" id="Q6K9T0"/>
<dbReference type="FunCoup" id="Q6K9T0">
    <property type="interactions" value="28"/>
</dbReference>
<dbReference type="STRING" id="39947.Q6K9T0"/>
<dbReference type="PaxDb" id="39947-Q6K9T0"/>
<dbReference type="EnsemblPlants" id="Os02t0830200-01">
    <property type="protein sequence ID" value="Os02t0830200-01"/>
    <property type="gene ID" value="Os02g0830200"/>
</dbReference>
<dbReference type="GeneID" id="4331245"/>
<dbReference type="Gramene" id="Os02t0830200-01">
    <property type="protein sequence ID" value="Os02t0830200-01"/>
    <property type="gene ID" value="Os02g0830200"/>
</dbReference>
<dbReference type="KEGG" id="dosa:Os02g0830200"/>
<dbReference type="KEGG" id="osa:4331245"/>
<dbReference type="eggNOG" id="KOG1601">
    <property type="taxonomic scope" value="Eukaryota"/>
</dbReference>
<dbReference type="HOGENOM" id="CLU_000445_69_5_1"/>
<dbReference type="InParanoid" id="Q6K9T0"/>
<dbReference type="OMA" id="SLCAHDH"/>
<dbReference type="OrthoDB" id="10650171at2759"/>
<dbReference type="Proteomes" id="UP000000763">
    <property type="component" value="Chromosome 2"/>
</dbReference>
<dbReference type="Proteomes" id="UP000007752">
    <property type="component" value="Chromosome 2"/>
</dbReference>
<dbReference type="Proteomes" id="UP000059680">
    <property type="component" value="Chromosome 2"/>
</dbReference>
<dbReference type="GO" id="GO:0005829">
    <property type="term" value="C:cytosol"/>
    <property type="evidence" value="ECO:0000314"/>
    <property type="project" value="UniProtKB"/>
</dbReference>
<dbReference type="GO" id="GO:0005634">
    <property type="term" value="C:nucleus"/>
    <property type="evidence" value="ECO:0000314"/>
    <property type="project" value="UniProtKB"/>
</dbReference>
<dbReference type="GO" id="GO:0009736">
    <property type="term" value="P:cytokinin-activated signaling pathway"/>
    <property type="evidence" value="ECO:0007669"/>
    <property type="project" value="UniProtKB-KW"/>
</dbReference>
<dbReference type="GO" id="GO:0000160">
    <property type="term" value="P:phosphorelay signal transduction system"/>
    <property type="evidence" value="ECO:0007669"/>
    <property type="project" value="UniProtKB-KW"/>
</dbReference>
<dbReference type="CDD" id="cd17581">
    <property type="entry name" value="REC_typeA_ARR"/>
    <property type="match status" value="1"/>
</dbReference>
<dbReference type="FunFam" id="3.40.50.2300:FF:000159">
    <property type="entry name" value="Two-component response regulator ORR5"/>
    <property type="match status" value="1"/>
</dbReference>
<dbReference type="Gene3D" id="3.40.50.2300">
    <property type="match status" value="1"/>
</dbReference>
<dbReference type="InterPro" id="IPR045279">
    <property type="entry name" value="ARR-like"/>
</dbReference>
<dbReference type="InterPro" id="IPR011006">
    <property type="entry name" value="CheY-like_superfamily"/>
</dbReference>
<dbReference type="InterPro" id="IPR001789">
    <property type="entry name" value="Sig_transdc_resp-reg_receiver"/>
</dbReference>
<dbReference type="PANTHER" id="PTHR43874">
    <property type="entry name" value="TWO-COMPONENT RESPONSE REGULATOR"/>
    <property type="match status" value="1"/>
</dbReference>
<dbReference type="PANTHER" id="PTHR43874:SF69">
    <property type="entry name" value="TWO-COMPONENT RESPONSE REGULATOR ORR3"/>
    <property type="match status" value="1"/>
</dbReference>
<dbReference type="Pfam" id="PF00072">
    <property type="entry name" value="Response_reg"/>
    <property type="match status" value="1"/>
</dbReference>
<dbReference type="SMART" id="SM00448">
    <property type="entry name" value="REC"/>
    <property type="match status" value="1"/>
</dbReference>
<dbReference type="SUPFAM" id="SSF52172">
    <property type="entry name" value="CheY-like"/>
    <property type="match status" value="1"/>
</dbReference>
<dbReference type="PROSITE" id="PS50110">
    <property type="entry name" value="RESPONSE_REGULATORY"/>
    <property type="match status" value="1"/>
</dbReference>
<evidence type="ECO:0000250" key="1">
    <source>
        <dbReference type="UniProtKB" id="Q9ZWS9"/>
    </source>
</evidence>
<evidence type="ECO:0000255" key="2">
    <source>
        <dbReference type="PROSITE-ProRule" id="PRU00169"/>
    </source>
</evidence>
<evidence type="ECO:0000269" key="3">
    <source>
    </source>
</evidence>
<evidence type="ECO:0000269" key="4">
    <source>
    </source>
</evidence>
<evidence type="ECO:0000269" key="5">
    <source>
    </source>
</evidence>
<evidence type="ECO:0000269" key="6">
    <source>
    </source>
</evidence>
<evidence type="ECO:0000303" key="7">
    <source>
    </source>
</evidence>
<evidence type="ECO:0000303" key="8">
    <source>
    </source>
</evidence>
<evidence type="ECO:0000303" key="9">
    <source>
    </source>
</evidence>
<evidence type="ECO:0000305" key="10"/>
<evidence type="ECO:0000312" key="11">
    <source>
        <dbReference type="EMBL" id="BAD22948.1"/>
    </source>
</evidence>
<evidence type="ECO:0000312" key="12">
    <source>
        <dbReference type="EMBL" id="BAF10527.1"/>
    </source>
</evidence>
<evidence type="ECO:0000312" key="13">
    <source>
        <dbReference type="EMBL" id="EAZ25187.1"/>
    </source>
</evidence>
<reference key="1">
    <citation type="journal article" date="2006" name="Gene">
        <title>Identification and characterization of cytokinin-signalling gene families in rice.</title>
        <authorList>
            <person name="Ito Y."/>
            <person name="Kurata N."/>
        </authorList>
    </citation>
    <scope>NUCLEOTIDE SEQUENCE [GENOMIC DNA]</scope>
    <scope>TISSUE SPECIFICITY</scope>
    <source>
        <strain>cv. Nipponbare</strain>
    </source>
</reference>
<reference key="2">
    <citation type="journal article" date="2007" name="Plant Cell Physiol.">
        <title>Overexpression of a type-A response regulator alters rice morphology and cytokinin metabolism.</title>
        <authorList>
            <person name="Hirose N."/>
            <person name="Makita N."/>
            <person name="Kojima M."/>
            <person name="Kamada-Nobusada T."/>
            <person name="Sakakibara H."/>
        </authorList>
    </citation>
    <scope>NUCLEOTIDE SEQUENCE [MRNA]</scope>
    <source>
        <strain>cv. Nipponbare</strain>
    </source>
</reference>
<reference key="3">
    <citation type="journal article" date="2005" name="Nature">
        <title>The map-based sequence of the rice genome.</title>
        <authorList>
            <consortium name="International rice genome sequencing project (IRGSP)"/>
        </authorList>
    </citation>
    <scope>NUCLEOTIDE SEQUENCE [LARGE SCALE GENOMIC DNA]</scope>
    <source>
        <strain>cv. Nipponbare</strain>
    </source>
</reference>
<reference key="4">
    <citation type="journal article" date="2008" name="Nucleic Acids Res.">
        <title>The rice annotation project database (RAP-DB): 2008 update.</title>
        <authorList>
            <consortium name="The rice annotation project (RAP)"/>
        </authorList>
    </citation>
    <scope>GENOME REANNOTATION</scope>
    <source>
        <strain>cv. Nipponbare</strain>
    </source>
</reference>
<reference key="5">
    <citation type="journal article" date="2013" name="Rice">
        <title>Improvement of the Oryza sativa Nipponbare reference genome using next generation sequence and optical map data.</title>
        <authorList>
            <person name="Kawahara Y."/>
            <person name="de la Bastide M."/>
            <person name="Hamilton J.P."/>
            <person name="Kanamori H."/>
            <person name="McCombie W.R."/>
            <person name="Ouyang S."/>
            <person name="Schwartz D.C."/>
            <person name="Tanaka T."/>
            <person name="Wu J."/>
            <person name="Zhou S."/>
            <person name="Childs K.L."/>
            <person name="Davidson R.M."/>
            <person name="Lin H."/>
            <person name="Quesada-Ocampo L."/>
            <person name="Vaillancourt B."/>
            <person name="Sakai H."/>
            <person name="Lee S.S."/>
            <person name="Kim J."/>
            <person name="Numa H."/>
            <person name="Itoh T."/>
            <person name="Buell C.R."/>
            <person name="Matsumoto T."/>
        </authorList>
    </citation>
    <scope>GENOME REANNOTATION</scope>
    <source>
        <strain>cv. Nipponbare</strain>
    </source>
</reference>
<reference key="6">
    <citation type="journal article" date="2005" name="PLoS Biol.">
        <title>The genomes of Oryza sativa: a history of duplications.</title>
        <authorList>
            <person name="Yu J."/>
            <person name="Wang J."/>
            <person name="Lin W."/>
            <person name="Li S."/>
            <person name="Li H."/>
            <person name="Zhou J."/>
            <person name="Ni P."/>
            <person name="Dong W."/>
            <person name="Hu S."/>
            <person name="Zeng C."/>
            <person name="Zhang J."/>
            <person name="Zhang Y."/>
            <person name="Li R."/>
            <person name="Xu Z."/>
            <person name="Li S."/>
            <person name="Li X."/>
            <person name="Zheng H."/>
            <person name="Cong L."/>
            <person name="Lin L."/>
            <person name="Yin J."/>
            <person name="Geng J."/>
            <person name="Li G."/>
            <person name="Shi J."/>
            <person name="Liu J."/>
            <person name="Lv H."/>
            <person name="Li J."/>
            <person name="Wang J."/>
            <person name="Deng Y."/>
            <person name="Ran L."/>
            <person name="Shi X."/>
            <person name="Wang X."/>
            <person name="Wu Q."/>
            <person name="Li C."/>
            <person name="Ren X."/>
            <person name="Wang J."/>
            <person name="Wang X."/>
            <person name="Li D."/>
            <person name="Liu D."/>
            <person name="Zhang X."/>
            <person name="Ji Z."/>
            <person name="Zhao W."/>
            <person name="Sun Y."/>
            <person name="Zhang Z."/>
            <person name="Bao J."/>
            <person name="Han Y."/>
            <person name="Dong L."/>
            <person name="Ji J."/>
            <person name="Chen P."/>
            <person name="Wu S."/>
            <person name="Liu J."/>
            <person name="Xiao Y."/>
            <person name="Bu D."/>
            <person name="Tan J."/>
            <person name="Yang L."/>
            <person name="Ye C."/>
            <person name="Zhang J."/>
            <person name="Xu J."/>
            <person name="Zhou Y."/>
            <person name="Yu Y."/>
            <person name="Zhang B."/>
            <person name="Zhuang S."/>
            <person name="Wei H."/>
            <person name="Liu B."/>
            <person name="Lei M."/>
            <person name="Yu H."/>
            <person name="Li Y."/>
            <person name="Xu H."/>
            <person name="Wei S."/>
            <person name="He X."/>
            <person name="Fang L."/>
            <person name="Zhang Z."/>
            <person name="Zhang Y."/>
            <person name="Huang X."/>
            <person name="Su Z."/>
            <person name="Tong W."/>
            <person name="Li J."/>
            <person name="Tong Z."/>
            <person name="Li S."/>
            <person name="Ye J."/>
            <person name="Wang L."/>
            <person name="Fang L."/>
            <person name="Lei T."/>
            <person name="Chen C.-S."/>
            <person name="Chen H.-C."/>
            <person name="Xu Z."/>
            <person name="Li H."/>
            <person name="Huang H."/>
            <person name="Zhang F."/>
            <person name="Xu H."/>
            <person name="Li N."/>
            <person name="Zhao C."/>
            <person name="Li S."/>
            <person name="Dong L."/>
            <person name="Huang Y."/>
            <person name="Li L."/>
            <person name="Xi Y."/>
            <person name="Qi Q."/>
            <person name="Li W."/>
            <person name="Zhang B."/>
            <person name="Hu W."/>
            <person name="Zhang Y."/>
            <person name="Tian X."/>
            <person name="Jiao Y."/>
            <person name="Liang X."/>
            <person name="Jin J."/>
            <person name="Gao L."/>
            <person name="Zheng W."/>
            <person name="Hao B."/>
            <person name="Liu S.-M."/>
            <person name="Wang W."/>
            <person name="Yuan L."/>
            <person name="Cao M."/>
            <person name="McDermott J."/>
            <person name="Samudrala R."/>
            <person name="Wang J."/>
            <person name="Wong G.K.-S."/>
            <person name="Yang H."/>
        </authorList>
    </citation>
    <scope>NUCLEOTIDE SEQUENCE [LARGE SCALE GENOMIC DNA]</scope>
    <source>
        <strain>cv. Nipponbare</strain>
    </source>
</reference>
<reference key="7">
    <citation type="journal article" date="2006" name="Plant Physiol.">
        <title>Whole-genome analysis of Oryza sativa reveals similar architecture of two-component signaling machinery with Arabidopsis.</title>
        <authorList>
            <person name="Pareek A."/>
            <person name="Singh A."/>
            <person name="Kumar M."/>
            <person name="Kushwaha H.R."/>
            <person name="Lynn A.M."/>
            <person name="Singla-Pareek S.L."/>
        </authorList>
    </citation>
    <scope>DISRUPTION PHENOTYPE</scope>
</reference>
<reference key="8">
    <citation type="journal article" date="2007" name="Genomics">
        <title>The two-component signal system in rice (Oryza sativa L.): a genome-wide study of cytokinin signal perception and transduction.</title>
        <authorList>
            <person name="Du L."/>
            <person name="Jiao F."/>
            <person name="Chu J."/>
            <person name="Jin G."/>
            <person name="Chen M."/>
            <person name="Wu P."/>
        </authorList>
    </citation>
    <scope>INDUCTION BY CYTOKININ</scope>
</reference>
<reference key="9">
    <citation type="journal article" date="2007" name="Plant Physiol.">
        <title>Nomenclature for two-component signaling elements of rice.</title>
        <authorList>
            <person name="Schaller G.E."/>
            <person name="Doi K."/>
            <person name="Hwang I."/>
            <person name="Kieber J.J."/>
            <person name="Khurana J.P."/>
            <person name="Kurata N."/>
            <person name="Mizuno T."/>
            <person name="Pareek A."/>
            <person name="Shiu S.H."/>
            <person name="Wu P."/>
            <person name="Yip W.K."/>
        </authorList>
    </citation>
    <scope>GENE FAMILY</scope>
    <scope>NOMENCLATURE</scope>
</reference>
<reference key="10">
    <citation type="journal article" date="2012" name="Plant Physiol.">
        <title>Characterization of genes involved in cytokinin signaling and metabolism from rice.</title>
        <authorList>
            <person name="Tsai Y.C."/>
            <person name="Weir N.R."/>
            <person name="Hill K."/>
            <person name="Zhang W."/>
            <person name="Kim H.J."/>
            <person name="Shiu S.H."/>
            <person name="Schaller G.E."/>
            <person name="Kieber J.J."/>
        </authorList>
    </citation>
    <scope>SUBCELLULAR LOCATION</scope>
</reference>